<reference key="1">
    <citation type="journal article" date="2000" name="DNA Res.">
        <title>Structural analysis of Arabidopsis thaliana chromosome 5. X. Sequence features of the regions of 3,076,755 bp covered by sixty P1 and TAC clones.</title>
        <authorList>
            <person name="Sato S."/>
            <person name="Nakamura Y."/>
            <person name="Kaneko T."/>
            <person name="Katoh T."/>
            <person name="Asamizu E."/>
            <person name="Kotani H."/>
            <person name="Tabata S."/>
        </authorList>
    </citation>
    <scope>NUCLEOTIDE SEQUENCE [LARGE SCALE GENOMIC DNA]</scope>
    <source>
        <strain>cv. Columbia</strain>
    </source>
</reference>
<reference key="2">
    <citation type="journal article" date="2017" name="Plant J.">
        <title>Araport11: a complete reannotation of the Arabidopsis thaliana reference genome.</title>
        <authorList>
            <person name="Cheng C.Y."/>
            <person name="Krishnakumar V."/>
            <person name="Chan A.P."/>
            <person name="Thibaud-Nissen F."/>
            <person name="Schobel S."/>
            <person name="Town C.D."/>
        </authorList>
    </citation>
    <scope>GENOME REANNOTATION</scope>
    <source>
        <strain>cv. Columbia</strain>
    </source>
</reference>
<reference key="3">
    <citation type="journal article" date="2003" name="Science">
        <title>Empirical analysis of transcriptional activity in the Arabidopsis genome.</title>
        <authorList>
            <person name="Yamada K."/>
            <person name="Lim J."/>
            <person name="Dale J.M."/>
            <person name="Chen H."/>
            <person name="Shinn P."/>
            <person name="Palm C.J."/>
            <person name="Southwick A.M."/>
            <person name="Wu H.C."/>
            <person name="Kim C.J."/>
            <person name="Nguyen M."/>
            <person name="Pham P.K."/>
            <person name="Cheuk R.F."/>
            <person name="Karlin-Newmann G."/>
            <person name="Liu S.X."/>
            <person name="Lam B."/>
            <person name="Sakano H."/>
            <person name="Wu T."/>
            <person name="Yu G."/>
            <person name="Miranda M."/>
            <person name="Quach H.L."/>
            <person name="Tripp M."/>
            <person name="Chang C.H."/>
            <person name="Lee J.M."/>
            <person name="Toriumi M.J."/>
            <person name="Chan M.M."/>
            <person name="Tang C.C."/>
            <person name="Onodera C.S."/>
            <person name="Deng J.M."/>
            <person name="Akiyama K."/>
            <person name="Ansari Y."/>
            <person name="Arakawa T."/>
            <person name="Banh J."/>
            <person name="Banno F."/>
            <person name="Bowser L."/>
            <person name="Brooks S.Y."/>
            <person name="Carninci P."/>
            <person name="Chao Q."/>
            <person name="Choy N."/>
            <person name="Enju A."/>
            <person name="Goldsmith A.D."/>
            <person name="Gurjal M."/>
            <person name="Hansen N.F."/>
            <person name="Hayashizaki Y."/>
            <person name="Johnson-Hopson C."/>
            <person name="Hsuan V.W."/>
            <person name="Iida K."/>
            <person name="Karnes M."/>
            <person name="Khan S."/>
            <person name="Koesema E."/>
            <person name="Ishida J."/>
            <person name="Jiang P.X."/>
            <person name="Jones T."/>
            <person name="Kawai J."/>
            <person name="Kamiya A."/>
            <person name="Meyers C."/>
            <person name="Nakajima M."/>
            <person name="Narusaka M."/>
            <person name="Seki M."/>
            <person name="Sakurai T."/>
            <person name="Satou M."/>
            <person name="Tamse R."/>
            <person name="Vaysberg M."/>
            <person name="Wallender E.K."/>
            <person name="Wong C."/>
            <person name="Yamamura Y."/>
            <person name="Yuan S."/>
            <person name="Shinozaki K."/>
            <person name="Davis R.W."/>
            <person name="Theologis A."/>
            <person name="Ecker J.R."/>
        </authorList>
    </citation>
    <scope>NUCLEOTIDE SEQUENCE [LARGE SCALE MRNA]</scope>
    <source>
        <strain>cv. Columbia</strain>
    </source>
</reference>
<reference key="4">
    <citation type="online journal article" date="1999" name="Plant Gene Register">
        <title>Identification and cloning of AtGST 10, members of a novel type of plant glutathione transferases.</title>
        <authorList>
            <person name="Dixon D.P."/>
            <person name="Cole D.J."/>
            <person name="Edwards R."/>
        </authorList>
        <locator>PGR99-053</locator>
    </citation>
    <scope>NUCLEOTIDE SEQUENCE [MRNA] OF 1-245</scope>
    <source>
        <strain>cv. Columbia</strain>
    </source>
</reference>
<reference key="5">
    <citation type="journal article" date="2002" name="Plant Mol. Biol.">
        <title>Probing the diversity of the Arabidopsis glutathione S-transferase gene family.</title>
        <authorList>
            <person name="Wagner U."/>
            <person name="Edwards R."/>
            <person name="Dixon D.P."/>
            <person name="Mauch F."/>
        </authorList>
    </citation>
    <scope>GENE FAMILY</scope>
    <scope>NOMENCLATURE</scope>
</reference>
<reference key="6">
    <citation type="journal article" date="2009" name="J. Exp. Bot.">
        <title>Enzyme activities and subcellular localization of members of the Arabidopsis glutathione transferase superfamily.</title>
        <authorList>
            <person name="Dixon D.P."/>
            <person name="Hawkins T."/>
            <person name="Hussey P.J."/>
            <person name="Edwards R."/>
        </authorList>
    </citation>
    <scope>SUBCELLULAR LOCATION</scope>
</reference>
<sequence length="591" mass="67689">MKLKVYADRMSQPSRAVLIFCKVNEIQFDEILISLGKRQQLSPEFKEINPMGKVPAIVDGRLKLFESHAILIYLSSAYASVVDHWYPNDLSKRAKIHSVLDWHHTNLRPGASGYVLNSVLAPALGLPLNPKAAAEAENILTNSLSTLETFWLKGSAKFLLGGKQPSIADLSLVCELMQLQVLDDKDRLRLLSPHKKVEQWIESTRKATMPHSDEVHEVLFRAKDRFQKQREMATASKPGPQSKIIQFSSIGGTSDGPNLVQDTTDRKARRRKWSPPDDVILISAWLNTSKDRKVVVYDEQQAHTFWKRIGAHVSNSASLANLPKREWNHCRQRWRKINDYVCKFVGCYDQALNQRASGQSEDDVFQVAYQLYYNNYMSNFKLEHAWRELRHNKKWCSTYTSENSKGGGSSKRTKLNGGGVYSSSCNPESVPIALDGEEQVMDRPLGVKSSKQKEKKVATKTMLEEREADSRSRLENLWVLDEEEQVMDLPLGVKSSKQKERKVATKTMIEEREAANFRSRLGNLWLLKEKEEREADSRSRLENLWALKEKDIEEQKKLTRMEVLKSLLGRRTGETSEKEETLKNKLIDEML</sequence>
<name>GSTT2_ARATH</name>
<protein>
    <recommendedName>
        <fullName>Glutathione S-transferase T2</fullName>
        <shortName>AtGSTT2</shortName>
        <ecNumber>2.5.1.18</ecNumber>
    </recommendedName>
    <alternativeName>
        <fullName>GST class-theta member 2</fullName>
    </alternativeName>
    <alternativeName>
        <fullName>Glutathione S-transferase 10B</fullName>
    </alternativeName>
</protein>
<organism>
    <name type="scientific">Arabidopsis thaliana</name>
    <name type="common">Mouse-ear cress</name>
    <dbReference type="NCBI Taxonomy" id="3702"/>
    <lineage>
        <taxon>Eukaryota</taxon>
        <taxon>Viridiplantae</taxon>
        <taxon>Streptophyta</taxon>
        <taxon>Embryophyta</taxon>
        <taxon>Tracheophyta</taxon>
        <taxon>Spermatophyta</taxon>
        <taxon>Magnoliopsida</taxon>
        <taxon>eudicotyledons</taxon>
        <taxon>Gunneridae</taxon>
        <taxon>Pentapetalae</taxon>
        <taxon>rosids</taxon>
        <taxon>malvids</taxon>
        <taxon>Brassicales</taxon>
        <taxon>Brassicaceae</taxon>
        <taxon>Camelineae</taxon>
        <taxon>Arabidopsis</taxon>
    </lineage>
</organism>
<evidence type="ECO:0000250" key="1"/>
<evidence type="ECO:0000255" key="2">
    <source>
        <dbReference type="PROSITE-ProRule" id="PRU00133"/>
    </source>
</evidence>
<evidence type="ECO:0000256" key="3">
    <source>
        <dbReference type="SAM" id="MobiDB-lite"/>
    </source>
</evidence>
<evidence type="ECO:0000269" key="4">
    <source>
    </source>
</evidence>
<evidence type="ECO:0000305" key="5"/>
<comment type="function">
    <text evidence="1">May be involved in the conjugation of reduced glutathione to a wide number of exogenous and endogenous hydrophobic electrophiles and have a detoxification role against certain herbicides.</text>
</comment>
<comment type="catalytic activity">
    <reaction>
        <text>RX + glutathione = an S-substituted glutathione + a halide anion + H(+)</text>
        <dbReference type="Rhea" id="RHEA:16437"/>
        <dbReference type="ChEBI" id="CHEBI:15378"/>
        <dbReference type="ChEBI" id="CHEBI:16042"/>
        <dbReference type="ChEBI" id="CHEBI:17792"/>
        <dbReference type="ChEBI" id="CHEBI:57925"/>
        <dbReference type="ChEBI" id="CHEBI:90779"/>
        <dbReference type="EC" id="2.5.1.18"/>
    </reaction>
</comment>
<comment type="subcellular location">
    <subcellularLocation>
        <location evidence="4">Peroxisome</location>
    </subcellularLocation>
</comment>
<comment type="similarity">
    <text evidence="5">Belongs to the GST superfamily. Theta family.</text>
</comment>
<comment type="sequence caution" evidence="5">
    <conflict type="erroneous gene model prediction">
        <sequence resource="EMBL-CDS" id="BAB11099"/>
    </conflict>
    <text>Was originally thought to correspond to two different genes At5g41230 and At5g41240.</text>
</comment>
<comment type="sequence caution" evidence="5">
    <conflict type="erroneous gene model prediction">
        <sequence resource="EMBL-CDS" id="BAB11100"/>
    </conflict>
    <text>Was originally thought to correspond to two different genes At5g41230 and At5g41240.</text>
</comment>
<comment type="sequence caution" evidence="5">
    <conflict type="miscellaneous discrepancy">
        <sequence resource="EMBL-CDS" id="CAA10662"/>
    </conflict>
    <text>Sequencing errors.</text>
</comment>
<accession>Q8L727</accession>
<accession>Q9FHD9</accession>
<accession>Q9FHE0</accession>
<accession>Q9ZRR6</accession>
<feature type="chain" id="PRO_0000413575" description="Glutathione S-transferase T2">
    <location>
        <begin position="1"/>
        <end position="591"/>
    </location>
</feature>
<feature type="domain" description="GST N-terminal">
    <location>
        <begin position="1"/>
        <end position="82"/>
    </location>
</feature>
<feature type="domain" description="GST C-terminal">
    <location>
        <begin position="89"/>
        <end position="226"/>
    </location>
</feature>
<feature type="domain" description="Myb-like" evidence="2">
    <location>
        <begin position="265"/>
        <end position="338"/>
    </location>
</feature>
<feature type="region of interest" description="Disordered" evidence="3">
    <location>
        <begin position="229"/>
        <end position="272"/>
    </location>
</feature>
<feature type="compositionally biased region" description="Polar residues" evidence="3">
    <location>
        <begin position="243"/>
        <end position="262"/>
    </location>
</feature>
<feature type="binding site" evidence="1">
    <location>
        <begin position="11"/>
        <end position="12"/>
    </location>
    <ligand>
        <name>glutathione</name>
        <dbReference type="ChEBI" id="CHEBI:57925"/>
    </ligand>
</feature>
<feature type="binding site" evidence="1">
    <location>
        <begin position="40"/>
        <end position="41"/>
    </location>
    <ligand>
        <name>glutathione</name>
        <dbReference type="ChEBI" id="CHEBI:57925"/>
    </ligand>
</feature>
<feature type="binding site" evidence="1">
    <location>
        <begin position="53"/>
        <end position="54"/>
    </location>
    <ligand>
        <name>glutathione</name>
        <dbReference type="ChEBI" id="CHEBI:57925"/>
    </ligand>
</feature>
<feature type="binding site" evidence="1">
    <location>
        <begin position="66"/>
        <end position="67"/>
    </location>
    <ligand>
        <name>glutathione</name>
        <dbReference type="ChEBI" id="CHEBI:57925"/>
    </ligand>
</feature>
<feature type="sequence conflict" description="In Ref. 4; CAA10662." evidence="5" ref="4">
    <original>M</original>
    <variation>MM</variation>
    <location>
        <position position="1"/>
    </location>
</feature>
<feature type="sequence conflict" description="In Ref. 4; CAA10662." evidence="5" ref="4">
    <original>R</original>
    <variation>K</variation>
    <location>
        <position position="9"/>
    </location>
</feature>
<feature type="sequence conflict" description="In Ref. 4; CAA10662." evidence="5" ref="4">
    <original>G</original>
    <variation>S</variation>
    <location>
        <position position="125"/>
    </location>
</feature>
<feature type="sequence conflict" description="In Ref. 4; CAA10662." evidence="5" ref="4">
    <original>I</original>
    <variation>M</variation>
    <location>
        <position position="244"/>
    </location>
</feature>
<proteinExistence type="evidence at transcript level"/>
<keyword id="KW-0216">Detoxification</keyword>
<keyword id="KW-0576">Peroxisome</keyword>
<keyword id="KW-1185">Reference proteome</keyword>
<keyword id="KW-0808">Transferase</keyword>
<dbReference type="EC" id="2.5.1.18"/>
<dbReference type="EMBL" id="AB019225">
    <property type="protein sequence ID" value="BAB11099.1"/>
    <property type="status" value="ALT_SEQ"/>
    <property type="molecule type" value="Genomic_DNA"/>
</dbReference>
<dbReference type="EMBL" id="AB019225">
    <property type="protein sequence ID" value="BAB11100.1"/>
    <property type="status" value="ALT_SEQ"/>
    <property type="molecule type" value="Genomic_DNA"/>
</dbReference>
<dbReference type="EMBL" id="CP002688">
    <property type="protein sequence ID" value="AED94656.1"/>
    <property type="molecule type" value="Genomic_DNA"/>
</dbReference>
<dbReference type="EMBL" id="AY139996">
    <property type="protein sequence ID" value="AAM98138.1"/>
    <property type="molecule type" value="mRNA"/>
</dbReference>
<dbReference type="EMBL" id="BT008361">
    <property type="protein sequence ID" value="AAP37720.1"/>
    <property type="molecule type" value="mRNA"/>
</dbReference>
<dbReference type="EMBL" id="AJ132398">
    <property type="protein sequence ID" value="CAA10662.1"/>
    <property type="status" value="ALT_SEQ"/>
    <property type="molecule type" value="mRNA"/>
</dbReference>
<dbReference type="PIR" id="T52580">
    <property type="entry name" value="T52580"/>
</dbReference>
<dbReference type="RefSeq" id="NP_198940.3">
    <property type="nucleotide sequence ID" value="NM_123489.4"/>
</dbReference>
<dbReference type="SMR" id="Q8L727"/>
<dbReference type="FunCoup" id="Q8L727">
    <property type="interactions" value="518"/>
</dbReference>
<dbReference type="STRING" id="3702.Q8L727"/>
<dbReference type="PaxDb" id="3702-AT5G41240.1"/>
<dbReference type="ProteomicsDB" id="248518"/>
<dbReference type="EnsemblPlants" id="AT5G41240.1">
    <property type="protein sequence ID" value="AT5G41240.1"/>
    <property type="gene ID" value="AT5G41240"/>
</dbReference>
<dbReference type="GeneID" id="834125"/>
<dbReference type="Gramene" id="AT5G41240.1">
    <property type="protein sequence ID" value="AT5G41240.1"/>
    <property type="gene ID" value="AT5G41240"/>
</dbReference>
<dbReference type="KEGG" id="ath:AT5G41240"/>
<dbReference type="Araport" id="AT5G41240"/>
<dbReference type="TAIR" id="AT5G41240">
    <property type="gene designation" value="GSTT2"/>
</dbReference>
<dbReference type="eggNOG" id="KOG0867">
    <property type="taxonomic scope" value="Eukaryota"/>
</dbReference>
<dbReference type="HOGENOM" id="CLU_462617_0_0_1"/>
<dbReference type="InParanoid" id="Q8L727"/>
<dbReference type="OrthoDB" id="422574at2759"/>
<dbReference type="PhylomeDB" id="Q8L727"/>
<dbReference type="BioCyc" id="ARA:AT5G41240-MONOMER"/>
<dbReference type="PRO" id="PR:Q8L727"/>
<dbReference type="Proteomes" id="UP000006548">
    <property type="component" value="Chromosome 5"/>
</dbReference>
<dbReference type="ExpressionAtlas" id="Q8L727">
    <property type="expression patterns" value="baseline and differential"/>
</dbReference>
<dbReference type="GO" id="GO:0005737">
    <property type="term" value="C:cytoplasm"/>
    <property type="evidence" value="ECO:0000303"/>
    <property type="project" value="TAIR"/>
</dbReference>
<dbReference type="GO" id="GO:0005777">
    <property type="term" value="C:peroxisome"/>
    <property type="evidence" value="ECO:0007669"/>
    <property type="project" value="UniProtKB-SubCell"/>
</dbReference>
<dbReference type="GO" id="GO:0004364">
    <property type="term" value="F:glutathione transferase activity"/>
    <property type="evidence" value="ECO:0007669"/>
    <property type="project" value="UniProtKB-EC"/>
</dbReference>
<dbReference type="GO" id="GO:0009407">
    <property type="term" value="P:toxin catabolic process"/>
    <property type="evidence" value="ECO:0000304"/>
    <property type="project" value="TAIR"/>
</dbReference>
<dbReference type="CDD" id="cd03183">
    <property type="entry name" value="GST_C_Theta"/>
    <property type="match status" value="1"/>
</dbReference>
<dbReference type="CDD" id="cd03050">
    <property type="entry name" value="GST_N_Theta"/>
    <property type="match status" value="1"/>
</dbReference>
<dbReference type="FunFam" id="1.20.1050.10:FF:000039">
    <property type="entry name" value="Glutathione S-transferase theta-1"/>
    <property type="match status" value="1"/>
</dbReference>
<dbReference type="Gene3D" id="1.20.1050.10">
    <property type="match status" value="1"/>
</dbReference>
<dbReference type="Gene3D" id="3.40.30.10">
    <property type="entry name" value="Glutaredoxin"/>
    <property type="match status" value="1"/>
</dbReference>
<dbReference type="InterPro" id="IPR010987">
    <property type="entry name" value="Glutathione-S-Trfase_C-like"/>
</dbReference>
<dbReference type="InterPro" id="IPR036282">
    <property type="entry name" value="Glutathione-S-Trfase_C_sf"/>
</dbReference>
<dbReference type="InterPro" id="IPR004045">
    <property type="entry name" value="Glutathione_S-Trfase_N"/>
</dbReference>
<dbReference type="InterPro" id="IPR040077">
    <property type="entry name" value="GST_C_Theta"/>
</dbReference>
<dbReference type="InterPro" id="IPR040075">
    <property type="entry name" value="GST_N_Theta"/>
</dbReference>
<dbReference type="InterPro" id="IPR043377">
    <property type="entry name" value="GSTT1/2/3"/>
</dbReference>
<dbReference type="InterPro" id="IPR001005">
    <property type="entry name" value="SANT/Myb"/>
</dbReference>
<dbReference type="InterPro" id="IPR036249">
    <property type="entry name" value="Thioredoxin-like_sf"/>
</dbReference>
<dbReference type="PANTHER" id="PTHR44750">
    <property type="entry name" value="GLUTATHIONE S-TRANSFERASE T1-RELATED"/>
    <property type="match status" value="1"/>
</dbReference>
<dbReference type="PANTHER" id="PTHR44750:SF1">
    <property type="entry name" value="GLUTATHIONE S-TRANSFERASE T1-RELATED"/>
    <property type="match status" value="1"/>
</dbReference>
<dbReference type="Pfam" id="PF13410">
    <property type="entry name" value="GST_C_2"/>
    <property type="match status" value="1"/>
</dbReference>
<dbReference type="Pfam" id="PF02798">
    <property type="entry name" value="GST_N"/>
    <property type="match status" value="1"/>
</dbReference>
<dbReference type="SFLD" id="SFLDG01153">
    <property type="entry name" value="Main.4:_Theta-like"/>
    <property type="match status" value="1"/>
</dbReference>
<dbReference type="SFLD" id="SFLDG00358">
    <property type="entry name" value="Main_(cytGST)"/>
    <property type="match status" value="1"/>
</dbReference>
<dbReference type="SUPFAM" id="SSF47616">
    <property type="entry name" value="GST C-terminal domain-like"/>
    <property type="match status" value="1"/>
</dbReference>
<dbReference type="SUPFAM" id="SSF52833">
    <property type="entry name" value="Thioredoxin-like"/>
    <property type="match status" value="1"/>
</dbReference>
<dbReference type="PROSITE" id="PS50405">
    <property type="entry name" value="GST_CTER"/>
    <property type="match status" value="1"/>
</dbReference>
<dbReference type="PROSITE" id="PS50404">
    <property type="entry name" value="GST_NTER"/>
    <property type="match status" value="1"/>
</dbReference>
<dbReference type="PROSITE" id="PS50090">
    <property type="entry name" value="MYB_LIKE"/>
    <property type="match status" value="1"/>
</dbReference>
<gene>
    <name type="primary">GSTT2</name>
    <name type="synonym">GST10B</name>
    <name type="ordered locus">At5g41240/At5g41230</name>
    <name type="ORF">K1O13.3/K1O13.2</name>
</gene>